<organism>
    <name type="scientific">Anemia phyllitidis</name>
    <name type="common">Fern</name>
    <name type="synonym">Osmunda phyllitidis</name>
    <dbReference type="NCBI Taxonomy" id="12940"/>
    <lineage>
        <taxon>Eukaryota</taxon>
        <taxon>Viridiplantae</taxon>
        <taxon>Streptophyta</taxon>
        <taxon>Embryophyta</taxon>
        <taxon>Tracheophyta</taxon>
        <taxon>Polypodiopsida</taxon>
        <taxon>Polypodiidae</taxon>
        <taxon>Schizaeales</taxon>
        <taxon>Anemiaceae</taxon>
        <taxon>Anemia</taxon>
    </lineage>
</organism>
<comment type="function">
    <text>Tubulin is the major constituent of microtubules, a cylinder consisting of laterally associated linear protofilaments composed of alpha- and beta-tubulin heterodimers. Microtubules grow by the addition of GTP-tubulin dimers to the microtubule end, where a stabilizing cap forms. Below the cap, tubulin dimers are in GDP-bound state, owing to GTPase activity of alpha-tubulin.</text>
</comment>
<comment type="cofactor">
    <cofactor evidence="1">
        <name>Mg(2+)</name>
        <dbReference type="ChEBI" id="CHEBI:18420"/>
    </cofactor>
</comment>
<comment type="subunit">
    <text>Dimer of alpha and beta chains. A typical microtubule is a hollow water-filled tube with an outer diameter of 25 nm and an inner diameter of 15 nM. Alpha-beta heterodimers associate head-to-tail to form protofilaments running lengthwise along the microtubule wall with the beta-tubulin subunit facing the microtubule plus end conferring a structural polarity. Microtubules usually have 13 protofilaments but different protofilament numbers can be found in some organisms and specialized cells.</text>
</comment>
<comment type="subcellular location">
    <subcellularLocation>
        <location>Cytoplasm</location>
        <location>Cytoskeleton</location>
    </subcellularLocation>
</comment>
<comment type="similarity">
    <text evidence="4">Belongs to the tubulin family.</text>
</comment>
<proteinExistence type="evidence at transcript level"/>
<evidence type="ECO:0000250" key="1">
    <source>
        <dbReference type="UniProtKB" id="P68363"/>
    </source>
</evidence>
<evidence type="ECO:0000250" key="2">
    <source>
        <dbReference type="UniProtKB" id="Q13509"/>
    </source>
</evidence>
<evidence type="ECO:0000256" key="3">
    <source>
        <dbReference type="SAM" id="MobiDB-lite"/>
    </source>
</evidence>
<evidence type="ECO:0000305" key="4"/>
<gene>
    <name type="primary">TUBB1</name>
</gene>
<dbReference type="EMBL" id="X69185">
    <property type="protein sequence ID" value="CAA48929.1"/>
    <property type="molecule type" value="mRNA"/>
</dbReference>
<dbReference type="PIR" id="S32668">
    <property type="entry name" value="S32668"/>
</dbReference>
<dbReference type="GO" id="GO:0005737">
    <property type="term" value="C:cytoplasm"/>
    <property type="evidence" value="ECO:0007669"/>
    <property type="project" value="UniProtKB-KW"/>
</dbReference>
<dbReference type="GO" id="GO:0005874">
    <property type="term" value="C:microtubule"/>
    <property type="evidence" value="ECO:0007669"/>
    <property type="project" value="UniProtKB-KW"/>
</dbReference>
<dbReference type="GO" id="GO:0005525">
    <property type="term" value="F:GTP binding"/>
    <property type="evidence" value="ECO:0007669"/>
    <property type="project" value="UniProtKB-KW"/>
</dbReference>
<dbReference type="GO" id="GO:0003924">
    <property type="term" value="F:GTPase activity"/>
    <property type="evidence" value="ECO:0007669"/>
    <property type="project" value="InterPro"/>
</dbReference>
<dbReference type="GO" id="GO:0046872">
    <property type="term" value="F:metal ion binding"/>
    <property type="evidence" value="ECO:0007669"/>
    <property type="project" value="UniProtKB-KW"/>
</dbReference>
<dbReference type="GO" id="GO:0005200">
    <property type="term" value="F:structural constituent of cytoskeleton"/>
    <property type="evidence" value="ECO:0007669"/>
    <property type="project" value="InterPro"/>
</dbReference>
<dbReference type="GO" id="GO:0007017">
    <property type="term" value="P:microtubule-based process"/>
    <property type="evidence" value="ECO:0007669"/>
    <property type="project" value="InterPro"/>
</dbReference>
<dbReference type="CDD" id="cd02187">
    <property type="entry name" value="beta_tubulin"/>
    <property type="match status" value="1"/>
</dbReference>
<dbReference type="FunFam" id="1.10.287.600:FF:000002">
    <property type="entry name" value="Tubulin beta chain"/>
    <property type="match status" value="1"/>
</dbReference>
<dbReference type="FunFam" id="3.30.1330.20:FF:000002">
    <property type="entry name" value="Tubulin beta chain"/>
    <property type="match status" value="1"/>
</dbReference>
<dbReference type="FunFam" id="3.40.50.1440:FF:000005">
    <property type="entry name" value="Tubulin beta chain"/>
    <property type="match status" value="1"/>
</dbReference>
<dbReference type="Gene3D" id="1.10.287.600">
    <property type="entry name" value="Helix hairpin bin"/>
    <property type="match status" value="1"/>
</dbReference>
<dbReference type="Gene3D" id="3.30.1330.20">
    <property type="entry name" value="Tubulin/FtsZ, C-terminal domain"/>
    <property type="match status" value="1"/>
</dbReference>
<dbReference type="Gene3D" id="3.40.50.1440">
    <property type="entry name" value="Tubulin/FtsZ, GTPase domain"/>
    <property type="match status" value="1"/>
</dbReference>
<dbReference type="InterPro" id="IPR013838">
    <property type="entry name" value="Beta-tubulin_BS"/>
</dbReference>
<dbReference type="InterPro" id="IPR002453">
    <property type="entry name" value="Beta_tubulin"/>
</dbReference>
<dbReference type="InterPro" id="IPR008280">
    <property type="entry name" value="Tub_FtsZ_C"/>
</dbReference>
<dbReference type="InterPro" id="IPR000217">
    <property type="entry name" value="Tubulin"/>
</dbReference>
<dbReference type="InterPro" id="IPR037103">
    <property type="entry name" value="Tubulin/FtsZ-like_C"/>
</dbReference>
<dbReference type="InterPro" id="IPR018316">
    <property type="entry name" value="Tubulin/FtsZ_2-layer-sand-dom"/>
</dbReference>
<dbReference type="InterPro" id="IPR036525">
    <property type="entry name" value="Tubulin/FtsZ_GTPase_sf"/>
</dbReference>
<dbReference type="InterPro" id="IPR023123">
    <property type="entry name" value="Tubulin_C"/>
</dbReference>
<dbReference type="InterPro" id="IPR017975">
    <property type="entry name" value="Tubulin_CS"/>
</dbReference>
<dbReference type="InterPro" id="IPR003008">
    <property type="entry name" value="Tubulin_FtsZ_GTPase"/>
</dbReference>
<dbReference type="PANTHER" id="PTHR11588">
    <property type="entry name" value="TUBULIN"/>
    <property type="match status" value="1"/>
</dbReference>
<dbReference type="Pfam" id="PF00091">
    <property type="entry name" value="Tubulin"/>
    <property type="match status" value="1"/>
</dbReference>
<dbReference type="Pfam" id="PF03953">
    <property type="entry name" value="Tubulin_C"/>
    <property type="match status" value="1"/>
</dbReference>
<dbReference type="PRINTS" id="PR01163">
    <property type="entry name" value="BETATUBULIN"/>
</dbReference>
<dbReference type="PRINTS" id="PR01161">
    <property type="entry name" value="TUBULIN"/>
</dbReference>
<dbReference type="SMART" id="SM00864">
    <property type="entry name" value="Tubulin"/>
    <property type="match status" value="1"/>
</dbReference>
<dbReference type="SMART" id="SM00865">
    <property type="entry name" value="Tubulin_C"/>
    <property type="match status" value="1"/>
</dbReference>
<dbReference type="SUPFAM" id="SSF55307">
    <property type="entry name" value="Tubulin C-terminal domain-like"/>
    <property type="match status" value="1"/>
</dbReference>
<dbReference type="SUPFAM" id="SSF52490">
    <property type="entry name" value="Tubulin nucleotide-binding domain-like"/>
    <property type="match status" value="1"/>
</dbReference>
<dbReference type="PROSITE" id="PS00227">
    <property type="entry name" value="TUBULIN"/>
    <property type="match status" value="1"/>
</dbReference>
<dbReference type="PROSITE" id="PS00228">
    <property type="entry name" value="TUBULIN_B_AUTOREG"/>
    <property type="match status" value="1"/>
</dbReference>
<protein>
    <recommendedName>
        <fullName>Tubulin beta-1 chain</fullName>
    </recommendedName>
    <alternativeName>
        <fullName>Beta-1-tubulin</fullName>
    </alternativeName>
</protein>
<feature type="chain" id="PRO_0000048329" description="Tubulin beta-1 chain">
    <location>
        <begin position="1"/>
        <end position="443"/>
    </location>
</feature>
<feature type="region of interest" description="Disordered" evidence="3">
    <location>
        <begin position="424"/>
        <end position="443"/>
    </location>
</feature>
<feature type="compositionally biased region" description="Acidic residues" evidence="3">
    <location>
        <begin position="434"/>
        <end position="443"/>
    </location>
</feature>
<feature type="binding site" evidence="2">
    <location>
        <position position="11"/>
    </location>
    <ligand>
        <name>GTP</name>
        <dbReference type="ChEBI" id="CHEBI:37565"/>
    </ligand>
</feature>
<feature type="binding site" evidence="1">
    <location>
        <position position="69"/>
    </location>
    <ligand>
        <name>GTP</name>
        <dbReference type="ChEBI" id="CHEBI:37565"/>
    </ligand>
</feature>
<feature type="binding site" evidence="1">
    <location>
        <position position="69"/>
    </location>
    <ligand>
        <name>Mg(2+)</name>
        <dbReference type="ChEBI" id="CHEBI:18420"/>
    </ligand>
</feature>
<feature type="binding site" evidence="2">
    <location>
        <position position="138"/>
    </location>
    <ligand>
        <name>GTP</name>
        <dbReference type="ChEBI" id="CHEBI:37565"/>
    </ligand>
</feature>
<feature type="binding site" evidence="2">
    <location>
        <position position="142"/>
    </location>
    <ligand>
        <name>GTP</name>
        <dbReference type="ChEBI" id="CHEBI:37565"/>
    </ligand>
</feature>
<feature type="binding site" evidence="2">
    <location>
        <position position="143"/>
    </location>
    <ligand>
        <name>GTP</name>
        <dbReference type="ChEBI" id="CHEBI:37565"/>
    </ligand>
</feature>
<feature type="binding site" evidence="2">
    <location>
        <position position="144"/>
    </location>
    <ligand>
        <name>GTP</name>
        <dbReference type="ChEBI" id="CHEBI:37565"/>
    </ligand>
</feature>
<feature type="binding site" evidence="2">
    <location>
        <position position="204"/>
    </location>
    <ligand>
        <name>GTP</name>
        <dbReference type="ChEBI" id="CHEBI:37565"/>
    </ligand>
</feature>
<feature type="binding site" evidence="2">
    <location>
        <position position="226"/>
    </location>
    <ligand>
        <name>GTP</name>
        <dbReference type="ChEBI" id="CHEBI:37565"/>
    </ligand>
</feature>
<name>TBB1_ANEPH</name>
<sequence length="443" mass="49741">MREILHVQGGQCGNQIGAKFWEVVCTEHGIDPTGTYRGDSETQLERVNVYYNEASCGRYVPRAVLMDLEPGTMDSVRSGHYGQIFRPDNFVFGQSGAGNNWAKGXYTEGAELIDSVLAVVRKEAENCDCLQGFQVCHSLGGGTGSGMGTLLISKIREEYPDRMMMTFSVFASPKVSDTVVEPYNATLSVHQLVENADECMVLDNEALYDIXLRTLKLVTPTFGDLNHLISATMSGVTCCLRFPGQLNSDLRKLAVNLIPFPRLHFFMVGFAPLTSRGSQQYXSLTVPELTQQMWDAKNMMCAADPRHGRYLTASAMFRGKMSTKEVDEQMINVQNKNSSYFVEWIPNNVKSSVCDIPPVGLKMAVTFIGNSTSIQEMFRRVSDQFTAMFRRKAFLHWYTGEGMDEMEFTEAESNMNDLVSEYQQYQDATAEREGEYEEDYDEA</sequence>
<accession>P33630</accession>
<reference key="1">
    <citation type="submission" date="1993-04" db="EMBL/GenBank/DDBJ databases">
        <title>Characterization of the alpha and beta tubulin gene families from Anemia phyllitidis L.Sw.</title>
        <authorList>
            <person name="Moepps B."/>
            <person name="Maucher H.P."/>
            <person name="Bogenberger J.M."/>
            <person name="Schraudolf H."/>
        </authorList>
    </citation>
    <scope>NUCLEOTIDE SEQUENCE [MRNA]</scope>
</reference>
<keyword id="KW-0963">Cytoplasm</keyword>
<keyword id="KW-0206">Cytoskeleton</keyword>
<keyword id="KW-0342">GTP-binding</keyword>
<keyword id="KW-0460">Magnesium</keyword>
<keyword id="KW-0479">Metal-binding</keyword>
<keyword id="KW-0493">Microtubule</keyword>
<keyword id="KW-0547">Nucleotide-binding</keyword>